<proteinExistence type="evidence at transcript level"/>
<reference key="1">
    <citation type="journal article" date="2002" name="Nature">
        <title>The genome sequence of Schizosaccharomyces pombe.</title>
        <authorList>
            <person name="Wood V."/>
            <person name="Gwilliam R."/>
            <person name="Rajandream M.A."/>
            <person name="Lyne M.H."/>
            <person name="Lyne R."/>
            <person name="Stewart A."/>
            <person name="Sgouros J.G."/>
            <person name="Peat N."/>
            <person name="Hayles J."/>
            <person name="Baker S.G."/>
            <person name="Basham D."/>
            <person name="Bowman S."/>
            <person name="Brooks K."/>
            <person name="Brown D."/>
            <person name="Brown S."/>
            <person name="Chillingworth T."/>
            <person name="Churcher C.M."/>
            <person name="Collins M."/>
            <person name="Connor R."/>
            <person name="Cronin A."/>
            <person name="Davis P."/>
            <person name="Feltwell T."/>
            <person name="Fraser A."/>
            <person name="Gentles S."/>
            <person name="Goble A."/>
            <person name="Hamlin N."/>
            <person name="Harris D.E."/>
            <person name="Hidalgo J."/>
            <person name="Hodgson G."/>
            <person name="Holroyd S."/>
            <person name="Hornsby T."/>
            <person name="Howarth S."/>
            <person name="Huckle E.J."/>
            <person name="Hunt S."/>
            <person name="Jagels K."/>
            <person name="James K.D."/>
            <person name="Jones L."/>
            <person name="Jones M."/>
            <person name="Leather S."/>
            <person name="McDonald S."/>
            <person name="McLean J."/>
            <person name="Mooney P."/>
            <person name="Moule S."/>
            <person name="Mungall K.L."/>
            <person name="Murphy L.D."/>
            <person name="Niblett D."/>
            <person name="Odell C."/>
            <person name="Oliver K."/>
            <person name="O'Neil S."/>
            <person name="Pearson D."/>
            <person name="Quail M.A."/>
            <person name="Rabbinowitsch E."/>
            <person name="Rutherford K.M."/>
            <person name="Rutter S."/>
            <person name="Saunders D."/>
            <person name="Seeger K."/>
            <person name="Sharp S."/>
            <person name="Skelton J."/>
            <person name="Simmonds M.N."/>
            <person name="Squares R."/>
            <person name="Squares S."/>
            <person name="Stevens K."/>
            <person name="Taylor K."/>
            <person name="Taylor R.G."/>
            <person name="Tivey A."/>
            <person name="Walsh S.V."/>
            <person name="Warren T."/>
            <person name="Whitehead S."/>
            <person name="Woodward J.R."/>
            <person name="Volckaert G."/>
            <person name="Aert R."/>
            <person name="Robben J."/>
            <person name="Grymonprez B."/>
            <person name="Weltjens I."/>
            <person name="Vanstreels E."/>
            <person name="Rieger M."/>
            <person name="Schaefer M."/>
            <person name="Mueller-Auer S."/>
            <person name="Gabel C."/>
            <person name="Fuchs M."/>
            <person name="Duesterhoeft A."/>
            <person name="Fritzc C."/>
            <person name="Holzer E."/>
            <person name="Moestl D."/>
            <person name="Hilbert H."/>
            <person name="Borzym K."/>
            <person name="Langer I."/>
            <person name="Beck A."/>
            <person name="Lehrach H."/>
            <person name="Reinhardt R."/>
            <person name="Pohl T.M."/>
            <person name="Eger P."/>
            <person name="Zimmermann W."/>
            <person name="Wedler H."/>
            <person name="Wambutt R."/>
            <person name="Purnelle B."/>
            <person name="Goffeau A."/>
            <person name="Cadieu E."/>
            <person name="Dreano S."/>
            <person name="Gloux S."/>
            <person name="Lelaure V."/>
            <person name="Mottier S."/>
            <person name="Galibert F."/>
            <person name="Aves S.J."/>
            <person name="Xiang Z."/>
            <person name="Hunt C."/>
            <person name="Moore K."/>
            <person name="Hurst S.M."/>
            <person name="Lucas M."/>
            <person name="Rochet M."/>
            <person name="Gaillardin C."/>
            <person name="Tallada V.A."/>
            <person name="Garzon A."/>
            <person name="Thode G."/>
            <person name="Daga R.R."/>
            <person name="Cruzado L."/>
            <person name="Jimenez J."/>
            <person name="Sanchez M."/>
            <person name="del Rey F."/>
            <person name="Benito J."/>
            <person name="Dominguez A."/>
            <person name="Revuelta J.L."/>
            <person name="Moreno S."/>
            <person name="Armstrong J."/>
            <person name="Forsburg S.L."/>
            <person name="Cerutti L."/>
            <person name="Lowe T."/>
            <person name="McCombie W.R."/>
            <person name="Paulsen I."/>
            <person name="Potashkin J."/>
            <person name="Shpakovski G.V."/>
            <person name="Ussery D."/>
            <person name="Barrell B.G."/>
            <person name="Nurse P."/>
        </authorList>
    </citation>
    <scope>NUCLEOTIDE SEQUENCE [LARGE SCALE GENOMIC DNA]</scope>
    <source>
        <strain>972 / ATCC 24843</strain>
    </source>
</reference>
<reference key="2">
    <citation type="journal article" date="2011" name="Science">
        <title>Comparative functional genomics of the fission yeasts.</title>
        <authorList>
            <person name="Rhind N."/>
            <person name="Chen Z."/>
            <person name="Yassour M."/>
            <person name="Thompson D.A."/>
            <person name="Haas B.J."/>
            <person name="Habib N."/>
            <person name="Wapinski I."/>
            <person name="Roy S."/>
            <person name="Lin M.F."/>
            <person name="Heiman D.I."/>
            <person name="Young S.K."/>
            <person name="Furuya K."/>
            <person name="Guo Y."/>
            <person name="Pidoux A."/>
            <person name="Chen H.M."/>
            <person name="Robbertse B."/>
            <person name="Goldberg J.M."/>
            <person name="Aoki K."/>
            <person name="Bayne E.H."/>
            <person name="Berlin A.M."/>
            <person name="Desjardins C.A."/>
            <person name="Dobbs E."/>
            <person name="Dukaj L."/>
            <person name="Fan L."/>
            <person name="FitzGerald M.G."/>
            <person name="French C."/>
            <person name="Gujja S."/>
            <person name="Hansen K."/>
            <person name="Keifenheim D."/>
            <person name="Levin J.Z."/>
            <person name="Mosher R.A."/>
            <person name="Mueller C.A."/>
            <person name="Pfiffner J."/>
            <person name="Priest M."/>
            <person name="Russ C."/>
            <person name="Smialowska A."/>
            <person name="Swoboda P."/>
            <person name="Sykes S.M."/>
            <person name="Vaughn M."/>
            <person name="Vengrova S."/>
            <person name="Yoder R."/>
            <person name="Zeng Q."/>
            <person name="Allshire R."/>
            <person name="Baulcombe D."/>
            <person name="Birren B.W."/>
            <person name="Brown W."/>
            <person name="Ekwall K."/>
            <person name="Kellis M."/>
            <person name="Leatherwood J."/>
            <person name="Levin H."/>
            <person name="Margalit H."/>
            <person name="Martienssen R."/>
            <person name="Nieduszynski C.A."/>
            <person name="Spatafora J.W."/>
            <person name="Friedman N."/>
            <person name="Dalgaard J.Z."/>
            <person name="Baumann P."/>
            <person name="Niki H."/>
            <person name="Regev A."/>
            <person name="Nusbaum C."/>
        </authorList>
    </citation>
    <scope>IDENTIFICATION</scope>
</reference>
<reference key="3">
    <citation type="journal article" date="2011" name="Genetics">
        <title>Augmented annotation of the Schizosaccharomyces pombe genome reveals additional genes required for growth and viability.</title>
        <authorList>
            <person name="Bitton D.A."/>
            <person name="Wood V."/>
            <person name="Scutt P.J."/>
            <person name="Grallert A."/>
            <person name="Yates T."/>
            <person name="Smith D.L."/>
            <person name="Hagan I.M."/>
            <person name="Miller C.J."/>
        </authorList>
    </citation>
    <scope>IDENTIFICATION</scope>
</reference>
<organism>
    <name type="scientific">Schizosaccharomyces pombe (strain 972 / ATCC 24843)</name>
    <name type="common">Fission yeast</name>
    <dbReference type="NCBI Taxonomy" id="284812"/>
    <lineage>
        <taxon>Eukaryota</taxon>
        <taxon>Fungi</taxon>
        <taxon>Dikarya</taxon>
        <taxon>Ascomycota</taxon>
        <taxon>Taphrinomycotina</taxon>
        <taxon>Schizosaccharomycetes</taxon>
        <taxon>Schizosaccharomycetales</taxon>
        <taxon>Schizosaccharomycetaceae</taxon>
        <taxon>Schizosaccharomyces</taxon>
    </lineage>
</organism>
<keyword id="KW-1185">Reference proteome</keyword>
<dbReference type="EMBL" id="CU329671">
    <property type="protein sequence ID" value="CCD31353.1"/>
    <property type="molecule type" value="Genomic_DNA"/>
</dbReference>
<dbReference type="RefSeq" id="XP_004001699.1">
    <property type="nucleotide sequence ID" value="XM_004001650.1"/>
</dbReference>
<dbReference type="SMR" id="G2TRS2"/>
<dbReference type="STRING" id="284812.G2TRS2"/>
<dbReference type="PaxDb" id="4896-SPBC839.19.1"/>
<dbReference type="EnsemblFungi" id="SPBC839.19.1">
    <property type="protein sequence ID" value="SPBC839.19.1:pep"/>
    <property type="gene ID" value="SPBC839.19"/>
</dbReference>
<dbReference type="PomBase" id="SPBC839.19">
    <property type="gene designation" value="new20"/>
</dbReference>
<dbReference type="VEuPathDB" id="FungiDB:SPBC839.19"/>
<dbReference type="eggNOG" id="ENOG502T58H">
    <property type="taxonomic scope" value="Eukaryota"/>
</dbReference>
<dbReference type="HOGENOM" id="CLU_2110391_0_0_1"/>
<dbReference type="InParanoid" id="G2TRS2"/>
<dbReference type="OMA" id="TLRHREY"/>
<dbReference type="PRO" id="PR:G2TRS2"/>
<dbReference type="Proteomes" id="UP000002485">
    <property type="component" value="Chromosome II"/>
</dbReference>
<dbReference type="GO" id="GO:0005783">
    <property type="term" value="C:endoplasmic reticulum"/>
    <property type="evidence" value="ECO:0000266"/>
    <property type="project" value="PomBase"/>
</dbReference>
<dbReference type="GO" id="GO:0006888">
    <property type="term" value="P:endoplasmic reticulum to Golgi vesicle-mediated transport"/>
    <property type="evidence" value="ECO:0000266"/>
    <property type="project" value="PomBase"/>
</dbReference>
<dbReference type="InterPro" id="IPR029704">
    <property type="entry name" value="STEEP-like"/>
</dbReference>
<dbReference type="PANTHER" id="PTHR46355:SF1">
    <property type="entry name" value="STING ER EXIT PROTEIN"/>
    <property type="match status" value="1"/>
</dbReference>
<dbReference type="PANTHER" id="PTHR46355">
    <property type="entry name" value="UPF0428 PROTEIN CXORF56"/>
    <property type="match status" value="1"/>
</dbReference>
<accession>G2TRS2</accession>
<sequence>MSNQGKDSFKAYSYFCPCGQLFLTIHVSLTRLPQRQLDKRHVVDEKLNHIAHFSTGNKYYITRSDGGYEQRIQLLCRRCTLECAYALEAAPGYIYVDPTLVNEKPVTVSVSNLKE</sequence>
<gene>
    <name evidence="3" type="primary">new20</name>
    <name evidence="3" type="ORF">SPBC839.19</name>
</gene>
<evidence type="ECO:0000250" key="1">
    <source>
        <dbReference type="UniProtKB" id="Q9H5V9"/>
    </source>
</evidence>
<evidence type="ECO:0000305" key="2"/>
<evidence type="ECO:0000312" key="3">
    <source>
        <dbReference type="PomBase" id="SPBC839.19"/>
    </source>
</evidence>
<protein>
    <recommendedName>
        <fullName evidence="2">ER exit protein</fullName>
    </recommendedName>
</protein>
<feature type="chain" id="PRO_0000416509" description="ER exit protein">
    <location>
        <begin position="1"/>
        <end position="115"/>
    </location>
</feature>
<comment type="function">
    <text evidence="1">May stimulate membrane curvature formation and subsequent endoplasmic reticulum exit site (ERES) establishment.</text>
</comment>
<comment type="similarity">
    <text evidence="2">Belongs to the STEEP1 family.</text>
</comment>
<name>STEEP_SCHPO</name>